<gene>
    <name evidence="1" type="primary">rpsN</name>
    <name type="ordered locus">OEOE_1030</name>
</gene>
<sequence>MAKKSKIEKEKRIEATVAKYAAKRAALKAAGDYQGLAKLPRDASPVRAHHRDLTDGRPHAYMRAFGLSRLNFRQLAHKGQIPGVRKASW</sequence>
<organism>
    <name type="scientific">Oenococcus oeni (strain ATCC BAA-331 / PSU-1)</name>
    <dbReference type="NCBI Taxonomy" id="203123"/>
    <lineage>
        <taxon>Bacteria</taxon>
        <taxon>Bacillati</taxon>
        <taxon>Bacillota</taxon>
        <taxon>Bacilli</taxon>
        <taxon>Lactobacillales</taxon>
        <taxon>Lactobacillaceae</taxon>
        <taxon>Oenococcus</taxon>
    </lineage>
</organism>
<comment type="function">
    <text evidence="1">Binds 16S rRNA, required for the assembly of 30S particles and may also be responsible for determining the conformation of the 16S rRNA at the A site.</text>
</comment>
<comment type="subunit">
    <text evidence="1">Part of the 30S ribosomal subunit. Contacts proteins S3 and S10.</text>
</comment>
<comment type="similarity">
    <text evidence="1">Belongs to the universal ribosomal protein uS14 family.</text>
</comment>
<dbReference type="EMBL" id="CP000411">
    <property type="protein sequence ID" value="ABJ56939.1"/>
    <property type="molecule type" value="Genomic_DNA"/>
</dbReference>
<dbReference type="RefSeq" id="WP_002816321.1">
    <property type="nucleotide sequence ID" value="NC_008528.1"/>
</dbReference>
<dbReference type="SMR" id="Q04F33"/>
<dbReference type="STRING" id="203123.OEOE_1030"/>
<dbReference type="GeneID" id="75065898"/>
<dbReference type="KEGG" id="ooe:OEOE_1030"/>
<dbReference type="eggNOG" id="COG0199">
    <property type="taxonomic scope" value="Bacteria"/>
</dbReference>
<dbReference type="HOGENOM" id="CLU_139869_0_0_9"/>
<dbReference type="Proteomes" id="UP000000774">
    <property type="component" value="Chromosome"/>
</dbReference>
<dbReference type="GO" id="GO:0005737">
    <property type="term" value="C:cytoplasm"/>
    <property type="evidence" value="ECO:0007669"/>
    <property type="project" value="UniProtKB-ARBA"/>
</dbReference>
<dbReference type="GO" id="GO:0015935">
    <property type="term" value="C:small ribosomal subunit"/>
    <property type="evidence" value="ECO:0007669"/>
    <property type="project" value="TreeGrafter"/>
</dbReference>
<dbReference type="GO" id="GO:0019843">
    <property type="term" value="F:rRNA binding"/>
    <property type="evidence" value="ECO:0007669"/>
    <property type="project" value="UniProtKB-UniRule"/>
</dbReference>
<dbReference type="GO" id="GO:0003735">
    <property type="term" value="F:structural constituent of ribosome"/>
    <property type="evidence" value="ECO:0007669"/>
    <property type="project" value="InterPro"/>
</dbReference>
<dbReference type="GO" id="GO:0006412">
    <property type="term" value="P:translation"/>
    <property type="evidence" value="ECO:0007669"/>
    <property type="project" value="UniProtKB-UniRule"/>
</dbReference>
<dbReference type="Gene3D" id="4.10.830.10">
    <property type="entry name" value="30s Ribosomal Protein S14, Chain N"/>
    <property type="match status" value="1"/>
</dbReference>
<dbReference type="HAMAP" id="MF_00537">
    <property type="entry name" value="Ribosomal_uS14_1"/>
    <property type="match status" value="1"/>
</dbReference>
<dbReference type="InterPro" id="IPR001209">
    <property type="entry name" value="Ribosomal_uS14"/>
</dbReference>
<dbReference type="InterPro" id="IPR023036">
    <property type="entry name" value="Ribosomal_uS14_bac/plastid"/>
</dbReference>
<dbReference type="InterPro" id="IPR043140">
    <property type="entry name" value="Ribosomal_uS14_sf"/>
</dbReference>
<dbReference type="NCBIfam" id="NF006477">
    <property type="entry name" value="PRK08881.1"/>
    <property type="match status" value="1"/>
</dbReference>
<dbReference type="PANTHER" id="PTHR19836">
    <property type="entry name" value="30S RIBOSOMAL PROTEIN S14"/>
    <property type="match status" value="1"/>
</dbReference>
<dbReference type="PANTHER" id="PTHR19836:SF19">
    <property type="entry name" value="SMALL RIBOSOMAL SUBUNIT PROTEIN US14M"/>
    <property type="match status" value="1"/>
</dbReference>
<dbReference type="Pfam" id="PF00253">
    <property type="entry name" value="Ribosomal_S14"/>
    <property type="match status" value="1"/>
</dbReference>
<dbReference type="SUPFAM" id="SSF57716">
    <property type="entry name" value="Glucocorticoid receptor-like (DNA-binding domain)"/>
    <property type="match status" value="1"/>
</dbReference>
<name>RS14_OENOB</name>
<protein>
    <recommendedName>
        <fullName evidence="1">Small ribosomal subunit protein uS14</fullName>
    </recommendedName>
    <alternativeName>
        <fullName evidence="2">30S ribosomal protein S14</fullName>
    </alternativeName>
</protein>
<reference key="1">
    <citation type="journal article" date="2006" name="Proc. Natl. Acad. Sci. U.S.A.">
        <title>Comparative genomics of the lactic acid bacteria.</title>
        <authorList>
            <person name="Makarova K.S."/>
            <person name="Slesarev A."/>
            <person name="Wolf Y.I."/>
            <person name="Sorokin A."/>
            <person name="Mirkin B."/>
            <person name="Koonin E.V."/>
            <person name="Pavlov A."/>
            <person name="Pavlova N."/>
            <person name="Karamychev V."/>
            <person name="Polouchine N."/>
            <person name="Shakhova V."/>
            <person name="Grigoriev I."/>
            <person name="Lou Y."/>
            <person name="Rohksar D."/>
            <person name="Lucas S."/>
            <person name="Huang K."/>
            <person name="Goodstein D.M."/>
            <person name="Hawkins T."/>
            <person name="Plengvidhya V."/>
            <person name="Welker D."/>
            <person name="Hughes J."/>
            <person name="Goh Y."/>
            <person name="Benson A."/>
            <person name="Baldwin K."/>
            <person name="Lee J.-H."/>
            <person name="Diaz-Muniz I."/>
            <person name="Dosti B."/>
            <person name="Smeianov V."/>
            <person name="Wechter W."/>
            <person name="Barabote R."/>
            <person name="Lorca G."/>
            <person name="Altermann E."/>
            <person name="Barrangou R."/>
            <person name="Ganesan B."/>
            <person name="Xie Y."/>
            <person name="Rawsthorne H."/>
            <person name="Tamir D."/>
            <person name="Parker C."/>
            <person name="Breidt F."/>
            <person name="Broadbent J.R."/>
            <person name="Hutkins R."/>
            <person name="O'Sullivan D."/>
            <person name="Steele J."/>
            <person name="Unlu G."/>
            <person name="Saier M.H. Jr."/>
            <person name="Klaenhammer T."/>
            <person name="Richardson P."/>
            <person name="Kozyavkin S."/>
            <person name="Weimer B.C."/>
            <person name="Mills D.A."/>
        </authorList>
    </citation>
    <scope>NUCLEOTIDE SEQUENCE [LARGE SCALE GENOMIC DNA]</scope>
    <source>
        <strain>ATCC BAA-331 / PSU-1</strain>
    </source>
</reference>
<evidence type="ECO:0000255" key="1">
    <source>
        <dbReference type="HAMAP-Rule" id="MF_00537"/>
    </source>
</evidence>
<evidence type="ECO:0000305" key="2"/>
<proteinExistence type="inferred from homology"/>
<accession>Q04F33</accession>
<keyword id="KW-1185">Reference proteome</keyword>
<keyword id="KW-0687">Ribonucleoprotein</keyword>
<keyword id="KW-0689">Ribosomal protein</keyword>
<keyword id="KW-0694">RNA-binding</keyword>
<keyword id="KW-0699">rRNA-binding</keyword>
<feature type="chain" id="PRO_1000128473" description="Small ribosomal subunit protein uS14">
    <location>
        <begin position="1"/>
        <end position="89"/>
    </location>
</feature>